<name>UPP_LACLA</name>
<dbReference type="EC" id="2.4.2.9" evidence="1"/>
<dbReference type="EMBL" id="AE005176">
    <property type="protein sequence ID" value="AAK06012.1"/>
    <property type="molecule type" value="Genomic_DNA"/>
</dbReference>
<dbReference type="PIR" id="B86864">
    <property type="entry name" value="B86864"/>
</dbReference>
<dbReference type="RefSeq" id="NP_268071.1">
    <property type="nucleotide sequence ID" value="NC_002662.1"/>
</dbReference>
<dbReference type="RefSeq" id="WP_004254935.1">
    <property type="nucleotide sequence ID" value="NC_002662.1"/>
</dbReference>
<dbReference type="SMR" id="Q9CEC9"/>
<dbReference type="PaxDb" id="272623-L175538"/>
<dbReference type="EnsemblBacteria" id="AAK06012">
    <property type="protein sequence ID" value="AAK06012"/>
    <property type="gene ID" value="L175538"/>
</dbReference>
<dbReference type="KEGG" id="lla:L175538"/>
<dbReference type="PATRIC" id="fig|272623.7.peg.2056"/>
<dbReference type="eggNOG" id="COG0035">
    <property type="taxonomic scope" value="Bacteria"/>
</dbReference>
<dbReference type="HOGENOM" id="CLU_067096_2_2_9"/>
<dbReference type="OrthoDB" id="9781675at2"/>
<dbReference type="UniPathway" id="UPA00574">
    <property type="reaction ID" value="UER00636"/>
</dbReference>
<dbReference type="Proteomes" id="UP000002196">
    <property type="component" value="Chromosome"/>
</dbReference>
<dbReference type="GO" id="GO:0005525">
    <property type="term" value="F:GTP binding"/>
    <property type="evidence" value="ECO:0007669"/>
    <property type="project" value="UniProtKB-KW"/>
</dbReference>
<dbReference type="GO" id="GO:0000287">
    <property type="term" value="F:magnesium ion binding"/>
    <property type="evidence" value="ECO:0007669"/>
    <property type="project" value="UniProtKB-UniRule"/>
</dbReference>
<dbReference type="GO" id="GO:0004845">
    <property type="term" value="F:uracil phosphoribosyltransferase activity"/>
    <property type="evidence" value="ECO:0007669"/>
    <property type="project" value="UniProtKB-UniRule"/>
</dbReference>
<dbReference type="GO" id="GO:0044206">
    <property type="term" value="P:UMP salvage"/>
    <property type="evidence" value="ECO:0007669"/>
    <property type="project" value="UniProtKB-UniRule"/>
</dbReference>
<dbReference type="GO" id="GO:0006223">
    <property type="term" value="P:uracil salvage"/>
    <property type="evidence" value="ECO:0007669"/>
    <property type="project" value="InterPro"/>
</dbReference>
<dbReference type="CDD" id="cd06223">
    <property type="entry name" value="PRTases_typeI"/>
    <property type="match status" value="1"/>
</dbReference>
<dbReference type="FunFam" id="3.40.50.2020:FF:000003">
    <property type="entry name" value="Uracil phosphoribosyltransferase"/>
    <property type="match status" value="1"/>
</dbReference>
<dbReference type="Gene3D" id="3.40.50.2020">
    <property type="match status" value="1"/>
</dbReference>
<dbReference type="HAMAP" id="MF_01218_B">
    <property type="entry name" value="Upp_B"/>
    <property type="match status" value="1"/>
</dbReference>
<dbReference type="InterPro" id="IPR000836">
    <property type="entry name" value="PRibTrfase_dom"/>
</dbReference>
<dbReference type="InterPro" id="IPR029057">
    <property type="entry name" value="PRTase-like"/>
</dbReference>
<dbReference type="InterPro" id="IPR034332">
    <property type="entry name" value="Upp_B"/>
</dbReference>
<dbReference type="InterPro" id="IPR050054">
    <property type="entry name" value="UPRTase/APRTase"/>
</dbReference>
<dbReference type="InterPro" id="IPR005765">
    <property type="entry name" value="Ura_phspho_trans"/>
</dbReference>
<dbReference type="NCBIfam" id="NF001097">
    <property type="entry name" value="PRK00129.1"/>
    <property type="match status" value="1"/>
</dbReference>
<dbReference type="NCBIfam" id="TIGR01091">
    <property type="entry name" value="upp"/>
    <property type="match status" value="1"/>
</dbReference>
<dbReference type="PANTHER" id="PTHR32315">
    <property type="entry name" value="ADENINE PHOSPHORIBOSYLTRANSFERASE"/>
    <property type="match status" value="1"/>
</dbReference>
<dbReference type="PANTHER" id="PTHR32315:SF4">
    <property type="entry name" value="URACIL PHOSPHORIBOSYLTRANSFERASE, CHLOROPLASTIC"/>
    <property type="match status" value="1"/>
</dbReference>
<dbReference type="Pfam" id="PF14681">
    <property type="entry name" value="UPRTase"/>
    <property type="match status" value="1"/>
</dbReference>
<dbReference type="SUPFAM" id="SSF53271">
    <property type="entry name" value="PRTase-like"/>
    <property type="match status" value="1"/>
</dbReference>
<protein>
    <recommendedName>
        <fullName evidence="1">Uracil phosphoribosyltransferase</fullName>
        <ecNumber evidence="1">2.4.2.9</ecNumber>
    </recommendedName>
    <alternativeName>
        <fullName evidence="1">UMP pyrophosphorylase</fullName>
    </alternativeName>
    <alternativeName>
        <fullName evidence="1">UPRTase</fullName>
    </alternativeName>
</protein>
<keyword id="KW-0021">Allosteric enzyme</keyword>
<keyword id="KW-0328">Glycosyltransferase</keyword>
<keyword id="KW-0342">GTP-binding</keyword>
<keyword id="KW-0460">Magnesium</keyword>
<keyword id="KW-0547">Nucleotide-binding</keyword>
<keyword id="KW-1185">Reference proteome</keyword>
<keyword id="KW-0808">Transferase</keyword>
<accession>Q9CEC9</accession>
<proteinExistence type="inferred from homology"/>
<evidence type="ECO:0000255" key="1">
    <source>
        <dbReference type="HAMAP-Rule" id="MF_01218"/>
    </source>
</evidence>
<reference key="1">
    <citation type="journal article" date="2001" name="Genome Res.">
        <title>The complete genome sequence of the lactic acid bacterium Lactococcus lactis ssp. lactis IL1403.</title>
        <authorList>
            <person name="Bolotin A."/>
            <person name="Wincker P."/>
            <person name="Mauger S."/>
            <person name="Jaillon O."/>
            <person name="Malarme K."/>
            <person name="Weissenbach J."/>
            <person name="Ehrlich S.D."/>
            <person name="Sorokin A."/>
        </authorList>
    </citation>
    <scope>NUCLEOTIDE SEQUENCE [LARGE SCALE GENOMIC DNA]</scope>
    <source>
        <strain>IL1403</strain>
    </source>
</reference>
<comment type="function">
    <text evidence="1">Catalyzes the conversion of uracil and 5-phospho-alpha-D-ribose 1-diphosphate (PRPP) to UMP and diphosphate.</text>
</comment>
<comment type="catalytic activity">
    <reaction evidence="1">
        <text>UMP + diphosphate = 5-phospho-alpha-D-ribose 1-diphosphate + uracil</text>
        <dbReference type="Rhea" id="RHEA:13017"/>
        <dbReference type="ChEBI" id="CHEBI:17568"/>
        <dbReference type="ChEBI" id="CHEBI:33019"/>
        <dbReference type="ChEBI" id="CHEBI:57865"/>
        <dbReference type="ChEBI" id="CHEBI:58017"/>
        <dbReference type="EC" id="2.4.2.9"/>
    </reaction>
</comment>
<comment type="cofactor">
    <cofactor evidence="1">
        <name>Mg(2+)</name>
        <dbReference type="ChEBI" id="CHEBI:18420"/>
    </cofactor>
    <text evidence="1">Binds 1 Mg(2+) ion per subunit. The magnesium is bound as Mg-PRPP.</text>
</comment>
<comment type="activity regulation">
    <text evidence="1">Allosterically activated by GTP.</text>
</comment>
<comment type="pathway">
    <text evidence="1">Pyrimidine metabolism; UMP biosynthesis via salvage pathway; UMP from uracil: step 1/1.</text>
</comment>
<comment type="similarity">
    <text evidence="1">Belongs to the UPRTase family.</text>
</comment>
<organism>
    <name type="scientific">Lactococcus lactis subsp. lactis (strain IL1403)</name>
    <name type="common">Streptococcus lactis</name>
    <dbReference type="NCBI Taxonomy" id="272623"/>
    <lineage>
        <taxon>Bacteria</taxon>
        <taxon>Bacillati</taxon>
        <taxon>Bacillota</taxon>
        <taxon>Bacilli</taxon>
        <taxon>Lactobacillales</taxon>
        <taxon>Streptococcaceae</taxon>
        <taxon>Lactococcus</taxon>
    </lineage>
</organism>
<feature type="chain" id="PRO_0000120836" description="Uracil phosphoribosyltransferase">
    <location>
        <begin position="1"/>
        <end position="211"/>
    </location>
</feature>
<feature type="binding site" evidence="1">
    <location>
        <position position="79"/>
    </location>
    <ligand>
        <name>5-phospho-alpha-D-ribose 1-diphosphate</name>
        <dbReference type="ChEBI" id="CHEBI:58017"/>
    </ligand>
</feature>
<feature type="binding site" evidence="1">
    <location>
        <position position="104"/>
    </location>
    <ligand>
        <name>5-phospho-alpha-D-ribose 1-diphosphate</name>
        <dbReference type="ChEBI" id="CHEBI:58017"/>
    </ligand>
</feature>
<feature type="binding site" evidence="1">
    <location>
        <begin position="131"/>
        <end position="139"/>
    </location>
    <ligand>
        <name>5-phospho-alpha-D-ribose 1-diphosphate</name>
        <dbReference type="ChEBI" id="CHEBI:58017"/>
    </ligand>
</feature>
<feature type="binding site" evidence="1">
    <location>
        <position position="196"/>
    </location>
    <ligand>
        <name>uracil</name>
        <dbReference type="ChEBI" id="CHEBI:17568"/>
    </ligand>
</feature>
<feature type="binding site" evidence="1">
    <location>
        <begin position="201"/>
        <end position="203"/>
    </location>
    <ligand>
        <name>uracil</name>
        <dbReference type="ChEBI" id="CHEBI:17568"/>
    </ligand>
</feature>
<feature type="binding site" evidence="1">
    <location>
        <position position="202"/>
    </location>
    <ligand>
        <name>5-phospho-alpha-D-ribose 1-diphosphate</name>
        <dbReference type="ChEBI" id="CHEBI:58017"/>
    </ligand>
</feature>
<sequence>MSKFQVVEHPLIQHKLSILRRKEASTKEFRELVDEIGMLMAYEVSRDLPLEDVEIETPVQKTTVKQIAGKKLAIVPILRAGIGMVDGILKLIPAARVGHIGMYRDEETLKPVEYLVKLPADIADRQIFLVDPMLATGGSAILAVDSLKKRNAKAENIKFVCLVAAPEGVKALQKAHPDIEIYTAALDEKLNEHGYIVPGLGDAGDRLFGTK</sequence>
<gene>
    <name evidence="1" type="primary">upp</name>
    <name type="ordered locus">LL1914</name>
    <name type="ORF">L175538</name>
</gene>